<organism>
    <name type="scientific">Clostridium botulinum (strain Langeland / NCTC 10281 / Type F)</name>
    <dbReference type="NCBI Taxonomy" id="441772"/>
    <lineage>
        <taxon>Bacteria</taxon>
        <taxon>Bacillati</taxon>
        <taxon>Bacillota</taxon>
        <taxon>Clostridia</taxon>
        <taxon>Eubacteriales</taxon>
        <taxon>Clostridiaceae</taxon>
        <taxon>Clostridium</taxon>
    </lineage>
</organism>
<sequence length="269" mass="31052">MNLNNLENIRYNEIKEFSDKIKKEFTFFQKKQVMDIIEKLNKDPRKNVIKLGQALEKFLNKYEEELKRTNNMYNFDRRYGNNYLIAGVDEVGRGPLAGPIVAAAVVLDLNVEEMQRIFNIKDSKKLSEKKREELDIIIREKAISYNIALVDNKTIDERGISWSNNEVLKRAVEGLKVKPDLVLSDGYAVKNLNIRNEFIIKGDSKSISIASSSIIAKVYRDNMMKEYSKGLNMYGFNHNAGYGTEEHVQAIKKYGPSKIHRMSFLTNIL</sequence>
<dbReference type="EC" id="3.1.26.4" evidence="1"/>
<dbReference type="EMBL" id="CP000728">
    <property type="protein sequence ID" value="ABS41974.1"/>
    <property type="molecule type" value="Genomic_DNA"/>
</dbReference>
<dbReference type="RefSeq" id="WP_004451019.1">
    <property type="nucleotide sequence ID" value="NC_009699.1"/>
</dbReference>
<dbReference type="SMR" id="A7GG29"/>
<dbReference type="KEGG" id="cbf:CLI_2497"/>
<dbReference type="HOGENOM" id="CLU_036532_2_1_9"/>
<dbReference type="Proteomes" id="UP000002410">
    <property type="component" value="Chromosome"/>
</dbReference>
<dbReference type="GO" id="GO:0005737">
    <property type="term" value="C:cytoplasm"/>
    <property type="evidence" value="ECO:0007669"/>
    <property type="project" value="UniProtKB-SubCell"/>
</dbReference>
<dbReference type="GO" id="GO:0032299">
    <property type="term" value="C:ribonuclease H2 complex"/>
    <property type="evidence" value="ECO:0007669"/>
    <property type="project" value="TreeGrafter"/>
</dbReference>
<dbReference type="GO" id="GO:0030145">
    <property type="term" value="F:manganese ion binding"/>
    <property type="evidence" value="ECO:0007669"/>
    <property type="project" value="UniProtKB-UniRule"/>
</dbReference>
<dbReference type="GO" id="GO:0003723">
    <property type="term" value="F:RNA binding"/>
    <property type="evidence" value="ECO:0007669"/>
    <property type="project" value="InterPro"/>
</dbReference>
<dbReference type="GO" id="GO:0004523">
    <property type="term" value="F:RNA-DNA hybrid ribonuclease activity"/>
    <property type="evidence" value="ECO:0007669"/>
    <property type="project" value="UniProtKB-UniRule"/>
</dbReference>
<dbReference type="GO" id="GO:0043137">
    <property type="term" value="P:DNA replication, removal of RNA primer"/>
    <property type="evidence" value="ECO:0007669"/>
    <property type="project" value="TreeGrafter"/>
</dbReference>
<dbReference type="GO" id="GO:0006298">
    <property type="term" value="P:mismatch repair"/>
    <property type="evidence" value="ECO:0007669"/>
    <property type="project" value="TreeGrafter"/>
</dbReference>
<dbReference type="CDD" id="cd07182">
    <property type="entry name" value="RNase_HII_bacteria_HII_like"/>
    <property type="match status" value="1"/>
</dbReference>
<dbReference type="FunFam" id="3.30.420.10:FF:000113">
    <property type="entry name" value="Ribonuclease HII"/>
    <property type="match status" value="1"/>
</dbReference>
<dbReference type="Gene3D" id="3.30.420.10">
    <property type="entry name" value="Ribonuclease H-like superfamily/Ribonuclease H"/>
    <property type="match status" value="1"/>
</dbReference>
<dbReference type="HAMAP" id="MF_00052_B">
    <property type="entry name" value="RNase_HII_B"/>
    <property type="match status" value="1"/>
</dbReference>
<dbReference type="InterPro" id="IPR022898">
    <property type="entry name" value="RNase_HII"/>
</dbReference>
<dbReference type="InterPro" id="IPR001352">
    <property type="entry name" value="RNase_HII/HIII"/>
</dbReference>
<dbReference type="InterPro" id="IPR024567">
    <property type="entry name" value="RNase_HII/HIII_dom"/>
</dbReference>
<dbReference type="InterPro" id="IPR012337">
    <property type="entry name" value="RNaseH-like_sf"/>
</dbReference>
<dbReference type="InterPro" id="IPR036397">
    <property type="entry name" value="RNaseH_sf"/>
</dbReference>
<dbReference type="NCBIfam" id="NF000594">
    <property type="entry name" value="PRK00015.1-1"/>
    <property type="match status" value="1"/>
</dbReference>
<dbReference type="NCBIfam" id="NF000595">
    <property type="entry name" value="PRK00015.1-3"/>
    <property type="match status" value="1"/>
</dbReference>
<dbReference type="PANTHER" id="PTHR10954">
    <property type="entry name" value="RIBONUCLEASE H2 SUBUNIT A"/>
    <property type="match status" value="1"/>
</dbReference>
<dbReference type="PANTHER" id="PTHR10954:SF18">
    <property type="entry name" value="RIBONUCLEASE HII"/>
    <property type="match status" value="1"/>
</dbReference>
<dbReference type="Pfam" id="PF01351">
    <property type="entry name" value="RNase_HII"/>
    <property type="match status" value="1"/>
</dbReference>
<dbReference type="SUPFAM" id="SSF53098">
    <property type="entry name" value="Ribonuclease H-like"/>
    <property type="match status" value="1"/>
</dbReference>
<dbReference type="PROSITE" id="PS51975">
    <property type="entry name" value="RNASE_H_2"/>
    <property type="match status" value="1"/>
</dbReference>
<feature type="chain" id="PRO_0000334879" description="Ribonuclease HII">
    <location>
        <begin position="1"/>
        <end position="269"/>
    </location>
</feature>
<feature type="domain" description="RNase H type-2" evidence="2">
    <location>
        <begin position="83"/>
        <end position="269"/>
    </location>
</feature>
<feature type="binding site" evidence="1">
    <location>
        <position position="89"/>
    </location>
    <ligand>
        <name>a divalent metal cation</name>
        <dbReference type="ChEBI" id="CHEBI:60240"/>
    </ligand>
</feature>
<feature type="binding site" evidence="1">
    <location>
        <position position="90"/>
    </location>
    <ligand>
        <name>a divalent metal cation</name>
        <dbReference type="ChEBI" id="CHEBI:60240"/>
    </ligand>
</feature>
<feature type="binding site" evidence="1">
    <location>
        <position position="185"/>
    </location>
    <ligand>
        <name>a divalent metal cation</name>
        <dbReference type="ChEBI" id="CHEBI:60240"/>
    </ligand>
</feature>
<reference key="1">
    <citation type="submission" date="2007-06" db="EMBL/GenBank/DDBJ databases">
        <authorList>
            <person name="Brinkac L.M."/>
            <person name="Daugherty S."/>
            <person name="Dodson R.J."/>
            <person name="Madupu R."/>
            <person name="Brown J.L."/>
            <person name="Bruce D."/>
            <person name="Detter C."/>
            <person name="Munk C."/>
            <person name="Smith L.A."/>
            <person name="Smith T.J."/>
            <person name="White O."/>
            <person name="Brettin T.S."/>
        </authorList>
    </citation>
    <scope>NUCLEOTIDE SEQUENCE [LARGE SCALE GENOMIC DNA]</scope>
    <source>
        <strain>Langeland / NCTC 10281 / Type F</strain>
    </source>
</reference>
<protein>
    <recommendedName>
        <fullName evidence="1">Ribonuclease HII</fullName>
        <shortName evidence="1">RNase HII</shortName>
        <ecNumber evidence="1">3.1.26.4</ecNumber>
    </recommendedName>
</protein>
<name>RNH2_CLOBL</name>
<accession>A7GG29</accession>
<proteinExistence type="inferred from homology"/>
<evidence type="ECO:0000255" key="1">
    <source>
        <dbReference type="HAMAP-Rule" id="MF_00052"/>
    </source>
</evidence>
<evidence type="ECO:0000255" key="2">
    <source>
        <dbReference type="PROSITE-ProRule" id="PRU01319"/>
    </source>
</evidence>
<comment type="function">
    <text evidence="1">Endonuclease that specifically degrades the RNA of RNA-DNA hybrids.</text>
</comment>
<comment type="catalytic activity">
    <reaction evidence="1">
        <text>Endonucleolytic cleavage to 5'-phosphomonoester.</text>
        <dbReference type="EC" id="3.1.26.4"/>
    </reaction>
</comment>
<comment type="cofactor">
    <cofactor evidence="1">
        <name>Mn(2+)</name>
        <dbReference type="ChEBI" id="CHEBI:29035"/>
    </cofactor>
    <cofactor evidence="1">
        <name>Mg(2+)</name>
        <dbReference type="ChEBI" id="CHEBI:18420"/>
    </cofactor>
    <text evidence="1">Manganese or magnesium. Binds 1 divalent metal ion per monomer in the absence of substrate. May bind a second metal ion after substrate binding.</text>
</comment>
<comment type="subcellular location">
    <subcellularLocation>
        <location evidence="1">Cytoplasm</location>
    </subcellularLocation>
</comment>
<comment type="similarity">
    <text evidence="1">Belongs to the RNase HII family.</text>
</comment>
<keyword id="KW-0963">Cytoplasm</keyword>
<keyword id="KW-0255">Endonuclease</keyword>
<keyword id="KW-0378">Hydrolase</keyword>
<keyword id="KW-0464">Manganese</keyword>
<keyword id="KW-0479">Metal-binding</keyword>
<keyword id="KW-0540">Nuclease</keyword>
<gene>
    <name evidence="1" type="primary">rnhB</name>
    <name type="ordered locus">CLI_2497</name>
</gene>